<feature type="chain" id="PRO_0000095776" description="Translation initiation factor IF-1">
    <location>
        <begin position="1"/>
        <end position="72"/>
    </location>
</feature>
<feature type="domain" description="S1-like" evidence="1">
    <location>
        <begin position="1"/>
        <end position="72"/>
    </location>
</feature>
<name>IF1_CLOPE</name>
<protein>
    <recommendedName>
        <fullName evidence="1">Translation initiation factor IF-1</fullName>
    </recommendedName>
</protein>
<evidence type="ECO:0000255" key="1">
    <source>
        <dbReference type="HAMAP-Rule" id="MF_00075"/>
    </source>
</evidence>
<proteinExistence type="inferred from homology"/>
<accession>Q8XHU6</accession>
<reference key="1">
    <citation type="journal article" date="2002" name="Proc. Natl. Acad. Sci. U.S.A.">
        <title>Complete genome sequence of Clostridium perfringens, an anaerobic flesh-eater.</title>
        <authorList>
            <person name="Shimizu T."/>
            <person name="Ohtani K."/>
            <person name="Hirakawa H."/>
            <person name="Ohshima K."/>
            <person name="Yamashita A."/>
            <person name="Shiba T."/>
            <person name="Ogasawara N."/>
            <person name="Hattori M."/>
            <person name="Kuhara S."/>
            <person name="Hayashi H."/>
        </authorList>
    </citation>
    <scope>NUCLEOTIDE SEQUENCE [LARGE SCALE GENOMIC DNA]</scope>
    <source>
        <strain>13 / Type A</strain>
    </source>
</reference>
<keyword id="KW-0963">Cytoplasm</keyword>
<keyword id="KW-0396">Initiation factor</keyword>
<keyword id="KW-0648">Protein biosynthesis</keyword>
<keyword id="KW-1185">Reference proteome</keyword>
<keyword id="KW-0694">RNA-binding</keyword>
<keyword id="KW-0699">rRNA-binding</keyword>
<gene>
    <name evidence="1" type="primary">infA</name>
    <name type="ordered locus">CPE2381</name>
</gene>
<comment type="function">
    <text evidence="1">One of the essential components for the initiation of protein synthesis. Stabilizes the binding of IF-2 and IF-3 on the 30S subunit to which N-formylmethionyl-tRNA(fMet) subsequently binds. Helps modulate mRNA selection, yielding the 30S pre-initiation complex (PIC). Upon addition of the 50S ribosomal subunit IF-1, IF-2 and IF-3 are released leaving the mature 70S translation initiation complex.</text>
</comment>
<comment type="subunit">
    <text evidence="1">Component of the 30S ribosomal translation pre-initiation complex which assembles on the 30S ribosome in the order IF-2 and IF-3, IF-1 and N-formylmethionyl-tRNA(fMet); mRNA recruitment can occur at any time during PIC assembly.</text>
</comment>
<comment type="subcellular location">
    <subcellularLocation>
        <location evidence="1">Cytoplasm</location>
    </subcellularLocation>
</comment>
<comment type="similarity">
    <text evidence="1">Belongs to the IF-1 family.</text>
</comment>
<organism>
    <name type="scientific">Clostridium perfringens (strain 13 / Type A)</name>
    <dbReference type="NCBI Taxonomy" id="195102"/>
    <lineage>
        <taxon>Bacteria</taxon>
        <taxon>Bacillati</taxon>
        <taxon>Bacillota</taxon>
        <taxon>Clostridia</taxon>
        <taxon>Eubacteriales</taxon>
        <taxon>Clostridiaceae</taxon>
        <taxon>Clostridium</taxon>
    </lineage>
</organism>
<sequence length="72" mass="8154">MSKSDIIEMQGTVLEALPNAMFEVELESGHKILAHISGKLRMNFIRILPGDKVTVELSPYDLTRGRITWRAK</sequence>
<dbReference type="EMBL" id="BA000016">
    <property type="protein sequence ID" value="BAB82087.1"/>
    <property type="molecule type" value="Genomic_DNA"/>
</dbReference>
<dbReference type="RefSeq" id="WP_003454491.1">
    <property type="nucleotide sequence ID" value="NC_003366.1"/>
</dbReference>
<dbReference type="SMR" id="Q8XHU6"/>
<dbReference type="STRING" id="195102.gene:10491698"/>
<dbReference type="GeneID" id="93001033"/>
<dbReference type="KEGG" id="cpe:CPE2381"/>
<dbReference type="HOGENOM" id="CLU_151267_1_0_9"/>
<dbReference type="Proteomes" id="UP000000818">
    <property type="component" value="Chromosome"/>
</dbReference>
<dbReference type="GO" id="GO:0005829">
    <property type="term" value="C:cytosol"/>
    <property type="evidence" value="ECO:0007669"/>
    <property type="project" value="TreeGrafter"/>
</dbReference>
<dbReference type="GO" id="GO:0043022">
    <property type="term" value="F:ribosome binding"/>
    <property type="evidence" value="ECO:0007669"/>
    <property type="project" value="UniProtKB-UniRule"/>
</dbReference>
<dbReference type="GO" id="GO:0019843">
    <property type="term" value="F:rRNA binding"/>
    <property type="evidence" value="ECO:0007669"/>
    <property type="project" value="UniProtKB-UniRule"/>
</dbReference>
<dbReference type="GO" id="GO:0003743">
    <property type="term" value="F:translation initiation factor activity"/>
    <property type="evidence" value="ECO:0007669"/>
    <property type="project" value="UniProtKB-UniRule"/>
</dbReference>
<dbReference type="CDD" id="cd04451">
    <property type="entry name" value="S1_IF1"/>
    <property type="match status" value="1"/>
</dbReference>
<dbReference type="FunFam" id="2.40.50.140:FF:000002">
    <property type="entry name" value="Translation initiation factor IF-1"/>
    <property type="match status" value="1"/>
</dbReference>
<dbReference type="Gene3D" id="2.40.50.140">
    <property type="entry name" value="Nucleic acid-binding proteins"/>
    <property type="match status" value="1"/>
</dbReference>
<dbReference type="HAMAP" id="MF_00075">
    <property type="entry name" value="IF_1"/>
    <property type="match status" value="1"/>
</dbReference>
<dbReference type="InterPro" id="IPR012340">
    <property type="entry name" value="NA-bd_OB-fold"/>
</dbReference>
<dbReference type="InterPro" id="IPR006196">
    <property type="entry name" value="RNA-binding_domain_S1_IF1"/>
</dbReference>
<dbReference type="InterPro" id="IPR003029">
    <property type="entry name" value="S1_domain"/>
</dbReference>
<dbReference type="InterPro" id="IPR004368">
    <property type="entry name" value="TIF_IF1"/>
</dbReference>
<dbReference type="NCBIfam" id="TIGR00008">
    <property type="entry name" value="infA"/>
    <property type="match status" value="1"/>
</dbReference>
<dbReference type="PANTHER" id="PTHR33370">
    <property type="entry name" value="TRANSLATION INITIATION FACTOR IF-1, CHLOROPLASTIC"/>
    <property type="match status" value="1"/>
</dbReference>
<dbReference type="PANTHER" id="PTHR33370:SF1">
    <property type="entry name" value="TRANSLATION INITIATION FACTOR IF-1, CHLOROPLASTIC"/>
    <property type="match status" value="1"/>
</dbReference>
<dbReference type="Pfam" id="PF01176">
    <property type="entry name" value="eIF-1a"/>
    <property type="match status" value="1"/>
</dbReference>
<dbReference type="SMART" id="SM00316">
    <property type="entry name" value="S1"/>
    <property type="match status" value="1"/>
</dbReference>
<dbReference type="SUPFAM" id="SSF50249">
    <property type="entry name" value="Nucleic acid-binding proteins"/>
    <property type="match status" value="1"/>
</dbReference>
<dbReference type="PROSITE" id="PS50832">
    <property type="entry name" value="S1_IF1_TYPE"/>
    <property type="match status" value="1"/>
</dbReference>